<sequence length="251" mass="28083">MASEQEKTADFGFRTVAKDEKEVMVAEVFHSVAAKYDLMNDLMSFGIHRIWKRFTIECSGVRRNQRVLDLAGGTGDLTAKFSRMVGEGGEVILADINASMLKVGREKLRNKGIIDNINYVQANAEALPFPDDFFDCITISFGLRNVTDKNKALRSMYRVLKPGGRLLVLEFSKPVIKQLSTIYDAYSFHILPRIGEAVASDAGSYRYLAESIRMHPDQETLKGMMSDAGFDSVNYFNLTGGIVALHRGFKF</sequence>
<reference key="1">
    <citation type="journal article" date="2004" name="Proc. Natl. Acad. Sci. U.S.A.">
        <title>Genome sequence of the enterobacterial phytopathogen Erwinia carotovora subsp. atroseptica and characterization of virulence factors.</title>
        <authorList>
            <person name="Bell K.S."/>
            <person name="Sebaihia M."/>
            <person name="Pritchard L."/>
            <person name="Holden M.T.G."/>
            <person name="Hyman L.J."/>
            <person name="Holeva M.C."/>
            <person name="Thomson N.R."/>
            <person name="Bentley S.D."/>
            <person name="Churcher L.J.C."/>
            <person name="Mungall K."/>
            <person name="Atkin R."/>
            <person name="Bason N."/>
            <person name="Brooks K."/>
            <person name="Chillingworth T."/>
            <person name="Clark K."/>
            <person name="Doggett J."/>
            <person name="Fraser A."/>
            <person name="Hance Z."/>
            <person name="Hauser H."/>
            <person name="Jagels K."/>
            <person name="Moule S."/>
            <person name="Norbertczak H."/>
            <person name="Ormond D."/>
            <person name="Price C."/>
            <person name="Quail M.A."/>
            <person name="Sanders M."/>
            <person name="Walker D."/>
            <person name="Whitehead S."/>
            <person name="Salmond G.P.C."/>
            <person name="Birch P.R.J."/>
            <person name="Parkhill J."/>
            <person name="Toth I.K."/>
        </authorList>
    </citation>
    <scope>NUCLEOTIDE SEQUENCE [LARGE SCALE GENOMIC DNA]</scope>
    <source>
        <strain>SCRI 1043 / ATCC BAA-672</strain>
    </source>
</reference>
<evidence type="ECO:0000255" key="1">
    <source>
        <dbReference type="HAMAP-Rule" id="MF_01813"/>
    </source>
</evidence>
<feature type="chain" id="PRO_0000193277" description="Ubiquinone/menaquinone biosynthesis C-methyltransferase UbiE">
    <location>
        <begin position="1"/>
        <end position="251"/>
    </location>
</feature>
<feature type="binding site" evidence="1">
    <location>
        <position position="74"/>
    </location>
    <ligand>
        <name>S-adenosyl-L-methionine</name>
        <dbReference type="ChEBI" id="CHEBI:59789"/>
    </ligand>
</feature>
<feature type="binding site" evidence="1">
    <location>
        <position position="95"/>
    </location>
    <ligand>
        <name>S-adenosyl-L-methionine</name>
        <dbReference type="ChEBI" id="CHEBI:59789"/>
    </ligand>
</feature>
<feature type="binding site" evidence="1">
    <location>
        <begin position="123"/>
        <end position="124"/>
    </location>
    <ligand>
        <name>S-adenosyl-L-methionine</name>
        <dbReference type="ChEBI" id="CHEBI:59789"/>
    </ligand>
</feature>
<feature type="binding site" evidence="1">
    <location>
        <position position="140"/>
    </location>
    <ligand>
        <name>S-adenosyl-L-methionine</name>
        <dbReference type="ChEBI" id="CHEBI:59789"/>
    </ligand>
</feature>
<protein>
    <recommendedName>
        <fullName evidence="1">Ubiquinone/menaquinone biosynthesis C-methyltransferase UbiE</fullName>
        <ecNumber evidence="1">2.1.1.163</ecNumber>
        <ecNumber evidence="1">2.1.1.201</ecNumber>
    </recommendedName>
    <alternativeName>
        <fullName evidence="1">2-methoxy-6-polyprenyl-1,4-benzoquinol methylase</fullName>
    </alternativeName>
    <alternativeName>
        <fullName evidence="1">Demethylmenaquinone methyltransferase</fullName>
    </alternativeName>
</protein>
<dbReference type="EC" id="2.1.1.163" evidence="1"/>
<dbReference type="EC" id="2.1.1.201" evidence="1"/>
<dbReference type="EMBL" id="BX950851">
    <property type="protein sequence ID" value="CAG73115.1"/>
    <property type="molecule type" value="Genomic_DNA"/>
</dbReference>
<dbReference type="RefSeq" id="WP_011091835.1">
    <property type="nucleotide sequence ID" value="NC_004547.2"/>
</dbReference>
<dbReference type="SMR" id="Q6DAQ7"/>
<dbReference type="STRING" id="218491.ECA0196"/>
<dbReference type="GeneID" id="57207053"/>
<dbReference type="KEGG" id="eca:ECA0196"/>
<dbReference type="PATRIC" id="fig|218491.5.peg.195"/>
<dbReference type="eggNOG" id="COG2226">
    <property type="taxonomic scope" value="Bacteria"/>
</dbReference>
<dbReference type="HOGENOM" id="CLU_037990_0_0_6"/>
<dbReference type="OrthoDB" id="9808140at2"/>
<dbReference type="UniPathway" id="UPA00079">
    <property type="reaction ID" value="UER00169"/>
</dbReference>
<dbReference type="UniPathway" id="UPA00232"/>
<dbReference type="Proteomes" id="UP000007966">
    <property type="component" value="Chromosome"/>
</dbReference>
<dbReference type="GO" id="GO:0008425">
    <property type="term" value="F:2-methoxy-6-polyprenyl-1,4-benzoquinol methyltransferase activity"/>
    <property type="evidence" value="ECO:0007669"/>
    <property type="project" value="UniProtKB-UniRule"/>
</dbReference>
<dbReference type="GO" id="GO:0043770">
    <property type="term" value="F:demethylmenaquinone methyltransferase activity"/>
    <property type="evidence" value="ECO:0007669"/>
    <property type="project" value="UniProtKB-UniRule"/>
</dbReference>
<dbReference type="GO" id="GO:0009060">
    <property type="term" value="P:aerobic respiration"/>
    <property type="evidence" value="ECO:0007669"/>
    <property type="project" value="UniProtKB-UniRule"/>
</dbReference>
<dbReference type="GO" id="GO:0009234">
    <property type="term" value="P:menaquinone biosynthetic process"/>
    <property type="evidence" value="ECO:0007669"/>
    <property type="project" value="UniProtKB-UniRule"/>
</dbReference>
<dbReference type="GO" id="GO:0032259">
    <property type="term" value="P:methylation"/>
    <property type="evidence" value="ECO:0007669"/>
    <property type="project" value="UniProtKB-KW"/>
</dbReference>
<dbReference type="CDD" id="cd02440">
    <property type="entry name" value="AdoMet_MTases"/>
    <property type="match status" value="1"/>
</dbReference>
<dbReference type="FunFam" id="3.40.50.150:FF:000014">
    <property type="entry name" value="Ubiquinone/menaquinone biosynthesis C-methyltransferase UbiE"/>
    <property type="match status" value="1"/>
</dbReference>
<dbReference type="Gene3D" id="3.40.50.150">
    <property type="entry name" value="Vaccinia Virus protein VP39"/>
    <property type="match status" value="1"/>
</dbReference>
<dbReference type="HAMAP" id="MF_01813">
    <property type="entry name" value="MenG_UbiE_methyltr"/>
    <property type="match status" value="1"/>
</dbReference>
<dbReference type="InterPro" id="IPR029063">
    <property type="entry name" value="SAM-dependent_MTases_sf"/>
</dbReference>
<dbReference type="InterPro" id="IPR004033">
    <property type="entry name" value="UbiE/COQ5_MeTrFase"/>
</dbReference>
<dbReference type="InterPro" id="IPR023576">
    <property type="entry name" value="UbiE/COQ5_MeTrFase_CS"/>
</dbReference>
<dbReference type="NCBIfam" id="TIGR01934">
    <property type="entry name" value="MenG_MenH_UbiE"/>
    <property type="match status" value="1"/>
</dbReference>
<dbReference type="NCBIfam" id="NF001240">
    <property type="entry name" value="PRK00216.1-1"/>
    <property type="match status" value="1"/>
</dbReference>
<dbReference type="NCBIfam" id="NF001242">
    <property type="entry name" value="PRK00216.1-3"/>
    <property type="match status" value="1"/>
</dbReference>
<dbReference type="NCBIfam" id="NF001244">
    <property type="entry name" value="PRK00216.1-5"/>
    <property type="match status" value="1"/>
</dbReference>
<dbReference type="PANTHER" id="PTHR43591:SF24">
    <property type="entry name" value="2-METHOXY-6-POLYPRENYL-1,4-BENZOQUINOL METHYLASE, MITOCHONDRIAL"/>
    <property type="match status" value="1"/>
</dbReference>
<dbReference type="PANTHER" id="PTHR43591">
    <property type="entry name" value="METHYLTRANSFERASE"/>
    <property type="match status" value="1"/>
</dbReference>
<dbReference type="Pfam" id="PF01209">
    <property type="entry name" value="Ubie_methyltran"/>
    <property type="match status" value="1"/>
</dbReference>
<dbReference type="SUPFAM" id="SSF53335">
    <property type="entry name" value="S-adenosyl-L-methionine-dependent methyltransferases"/>
    <property type="match status" value="1"/>
</dbReference>
<dbReference type="PROSITE" id="PS51608">
    <property type="entry name" value="SAM_MT_UBIE"/>
    <property type="match status" value="1"/>
</dbReference>
<dbReference type="PROSITE" id="PS01183">
    <property type="entry name" value="UBIE_1"/>
    <property type="match status" value="1"/>
</dbReference>
<dbReference type="PROSITE" id="PS01184">
    <property type="entry name" value="UBIE_2"/>
    <property type="match status" value="1"/>
</dbReference>
<gene>
    <name evidence="1" type="primary">ubiE</name>
    <name type="ordered locus">ECA0196</name>
</gene>
<accession>Q6DAQ7</accession>
<organism>
    <name type="scientific">Pectobacterium atrosepticum (strain SCRI 1043 / ATCC BAA-672)</name>
    <name type="common">Erwinia carotovora subsp. atroseptica</name>
    <dbReference type="NCBI Taxonomy" id="218491"/>
    <lineage>
        <taxon>Bacteria</taxon>
        <taxon>Pseudomonadati</taxon>
        <taxon>Pseudomonadota</taxon>
        <taxon>Gammaproteobacteria</taxon>
        <taxon>Enterobacterales</taxon>
        <taxon>Pectobacteriaceae</taxon>
        <taxon>Pectobacterium</taxon>
    </lineage>
</organism>
<keyword id="KW-0474">Menaquinone biosynthesis</keyword>
<keyword id="KW-0489">Methyltransferase</keyword>
<keyword id="KW-1185">Reference proteome</keyword>
<keyword id="KW-0949">S-adenosyl-L-methionine</keyword>
<keyword id="KW-0808">Transferase</keyword>
<keyword id="KW-0831">Ubiquinone biosynthesis</keyword>
<proteinExistence type="inferred from homology"/>
<comment type="function">
    <text evidence="1">Methyltransferase required for the conversion of demethylmenaquinol (DMKH2) to menaquinol (MKH2) and the conversion of 2-polyprenyl-6-methoxy-1,4-benzoquinol (DDMQH2) to 2-polyprenyl-3-methyl-6-methoxy-1,4-benzoquinol (DMQH2).</text>
</comment>
<comment type="catalytic activity">
    <reaction evidence="1">
        <text>a 2-demethylmenaquinol + S-adenosyl-L-methionine = a menaquinol + S-adenosyl-L-homocysteine + H(+)</text>
        <dbReference type="Rhea" id="RHEA:42640"/>
        <dbReference type="Rhea" id="RHEA-COMP:9539"/>
        <dbReference type="Rhea" id="RHEA-COMP:9563"/>
        <dbReference type="ChEBI" id="CHEBI:15378"/>
        <dbReference type="ChEBI" id="CHEBI:18151"/>
        <dbReference type="ChEBI" id="CHEBI:55437"/>
        <dbReference type="ChEBI" id="CHEBI:57856"/>
        <dbReference type="ChEBI" id="CHEBI:59789"/>
        <dbReference type="EC" id="2.1.1.163"/>
    </reaction>
</comment>
<comment type="catalytic activity">
    <reaction evidence="1">
        <text>a 2-methoxy-6-(all-trans-polyprenyl)benzene-1,4-diol + S-adenosyl-L-methionine = a 5-methoxy-2-methyl-3-(all-trans-polyprenyl)benzene-1,4-diol + S-adenosyl-L-homocysteine + H(+)</text>
        <dbReference type="Rhea" id="RHEA:28286"/>
        <dbReference type="Rhea" id="RHEA-COMP:10858"/>
        <dbReference type="Rhea" id="RHEA-COMP:10859"/>
        <dbReference type="ChEBI" id="CHEBI:15378"/>
        <dbReference type="ChEBI" id="CHEBI:57856"/>
        <dbReference type="ChEBI" id="CHEBI:59789"/>
        <dbReference type="ChEBI" id="CHEBI:84166"/>
        <dbReference type="ChEBI" id="CHEBI:84167"/>
        <dbReference type="EC" id="2.1.1.201"/>
    </reaction>
</comment>
<comment type="pathway">
    <text evidence="1">Quinol/quinone metabolism; menaquinone biosynthesis; menaquinol from 1,4-dihydroxy-2-naphthoate: step 2/2.</text>
</comment>
<comment type="pathway">
    <text evidence="1">Cofactor biosynthesis; ubiquinone biosynthesis.</text>
</comment>
<comment type="similarity">
    <text evidence="1">Belongs to the class I-like SAM-binding methyltransferase superfamily. MenG/UbiE family.</text>
</comment>
<name>UBIE_PECAS</name>